<sequence>MEGRGWPWKRKSSDKATTEKPVVGIESTPVCSLSYLASLENQEKCKNTNYVQITMDSYTHMSRMEDQVKLFEVQVKDLKEKLTLAHSEINTKESLILQHAKVAEEAVSGWEKADAETLALKRQLESVTLLKLTAEDRASHLDDALKECTRQIRIVKEESDKKLQDVILAKTSQWDKIKAELEGKIDELSEGLHRAASDNAALTRSLQERSEMIVRISEERSKAEADVEKLKTNLQLAEKEISYLKYDLHVASKEVEIRNEEKNMSLKSADIANKQHLEGVKKIAKLEAECHRLRGLLRKKLPGPAAMAQMKLEVEGLGHEFTDPRAQRNMSQNHNAHIAKAEISTDHKLEECKRENVYLTRRTLEMEEEIQTLKEHLSARNNELQVSRNVCAKTLGKLKILEGQMHMFNNDKNAPKSNSRNLSESLSSGHDHHYPPSVTSVSEDGFDEEGSSSECGPATSLDSHKVRKVSVNGSSKPRSSSRLELMDDFLEIEKLVGSDPDGANSASKSSNSVCSRRSVEKQSSSKSSEPDEDTTTLDQLLMVLRSRINRIFESQEGISIDKIVEAARFSIQEMQGSSTKRMSSHLFEVTDETLEKHVDIQNSEKEQKNTKQQDLEAAVANIHHFIKSTTKEATQLQDMNGNGQLRESLEDFSSSVSKYPTGESSLSDVMLELSRISVLASNLNNGALTLKPHSKEIPVTESNDKVTLLFEESDSNPLGDTFAKTDHCVDNLINGDDSSCKSLLKEVEQLKLEKENIAVELSRCLQNLESTKAWLEEKEQLISKLKSQLTSSEDLQSLAETQLKCVTESYKSLDLHAKELEAKVKSLEEETKRLEMAFTTEKHGHEETLAKCRDLQEKMQRNETCENCSSSKLQPNQEKDIVSATEKLAACQETIHLLSQQLQSLQPQSNHILKSRSPEKKFQQHKASEVTPNSALDDLPHVHIIQPSRSVKHTVNPTVHAIMKSSSVSSSSKEDNEKHTRGLGRFFSSKSKNSAR</sequence>
<keyword id="KW-0175">Coiled coil</keyword>
<keyword id="KW-1185">Reference proteome</keyword>
<dbReference type="EMBL" id="AL022141">
    <property type="protein sequence ID" value="CAA18118.1"/>
    <property type="molecule type" value="Genomic_DNA"/>
</dbReference>
<dbReference type="EMBL" id="AL022373">
    <property type="protein sequence ID" value="CAA18506.1"/>
    <property type="status" value="ALT_SEQ"/>
    <property type="molecule type" value="Genomic_DNA"/>
</dbReference>
<dbReference type="EMBL" id="AL161588">
    <property type="protein sequence ID" value="CAB81521.1"/>
    <property type="status" value="ALT_SEQ"/>
    <property type="molecule type" value="Genomic_DNA"/>
</dbReference>
<dbReference type="EMBL" id="CP002687">
    <property type="protein sequence ID" value="AEE86622.1"/>
    <property type="molecule type" value="Genomic_DNA"/>
</dbReference>
<dbReference type="EMBL" id="CP002687">
    <property type="protein sequence ID" value="ANM67523.1"/>
    <property type="molecule type" value="Genomic_DNA"/>
</dbReference>
<dbReference type="EMBL" id="AK229393">
    <property type="protein sequence ID" value="BAF01255.1"/>
    <property type="status" value="ALT_INIT"/>
    <property type="molecule type" value="mRNA"/>
</dbReference>
<dbReference type="PIR" id="T05505">
    <property type="entry name" value="T05505"/>
</dbReference>
<dbReference type="RefSeq" id="NP_001320150.1">
    <property type="nucleotide sequence ID" value="NM_001342404.1"/>
</dbReference>
<dbReference type="RefSeq" id="NP_195335.4">
    <property type="nucleotide sequence ID" value="NM_119779.5"/>
</dbReference>
<dbReference type="SMR" id="O65649"/>
<dbReference type="FunCoup" id="O65649">
    <property type="interactions" value="165"/>
</dbReference>
<dbReference type="STRING" id="3702.O65649"/>
<dbReference type="PaxDb" id="3702-AT4G36120.1"/>
<dbReference type="ProteomicsDB" id="230039"/>
<dbReference type="EnsemblPlants" id="AT4G36120.1">
    <property type="protein sequence ID" value="AT4G36120.1"/>
    <property type="gene ID" value="AT4G36120"/>
</dbReference>
<dbReference type="EnsemblPlants" id="AT4G36120.2">
    <property type="protein sequence ID" value="AT4G36120.2"/>
    <property type="gene ID" value="AT4G36120"/>
</dbReference>
<dbReference type="GeneID" id="829769"/>
<dbReference type="Gramene" id="AT4G36120.1">
    <property type="protein sequence ID" value="AT4G36120.1"/>
    <property type="gene ID" value="AT4G36120"/>
</dbReference>
<dbReference type="Gramene" id="AT4G36120.2">
    <property type="protein sequence ID" value="AT4G36120.2"/>
    <property type="gene ID" value="AT4G36120"/>
</dbReference>
<dbReference type="KEGG" id="ath:AT4G36120"/>
<dbReference type="Araport" id="AT4G36120"/>
<dbReference type="TAIR" id="AT4G36120"/>
<dbReference type="eggNOG" id="ENOG502QU34">
    <property type="taxonomic scope" value="Eukaryota"/>
</dbReference>
<dbReference type="HOGENOM" id="CLU_008957_0_0_1"/>
<dbReference type="InParanoid" id="O65649"/>
<dbReference type="OMA" id="THMSRME"/>
<dbReference type="PhylomeDB" id="O65649"/>
<dbReference type="PRO" id="PR:O65649"/>
<dbReference type="Proteomes" id="UP000006548">
    <property type="component" value="Chromosome 4"/>
</dbReference>
<dbReference type="ExpressionAtlas" id="O65649">
    <property type="expression patterns" value="baseline and differential"/>
</dbReference>
<dbReference type="InterPro" id="IPR008587">
    <property type="entry name" value="FPP_plant"/>
</dbReference>
<dbReference type="PANTHER" id="PTHR31580">
    <property type="entry name" value="FILAMENT-LIKE PLANT PROTEIN 4"/>
    <property type="match status" value="1"/>
</dbReference>
<dbReference type="PANTHER" id="PTHR31580:SF30">
    <property type="entry name" value="FILAMENT-LIKE PLANT PROTEIN 5"/>
    <property type="match status" value="1"/>
</dbReference>
<dbReference type="Pfam" id="PF05911">
    <property type="entry name" value="FPP"/>
    <property type="match status" value="1"/>
</dbReference>
<proteinExistence type="evidence at transcript level"/>
<name>FPP5_ARATH</name>
<organism>
    <name type="scientific">Arabidopsis thaliana</name>
    <name type="common">Mouse-ear cress</name>
    <dbReference type="NCBI Taxonomy" id="3702"/>
    <lineage>
        <taxon>Eukaryota</taxon>
        <taxon>Viridiplantae</taxon>
        <taxon>Streptophyta</taxon>
        <taxon>Embryophyta</taxon>
        <taxon>Tracheophyta</taxon>
        <taxon>Spermatophyta</taxon>
        <taxon>Magnoliopsida</taxon>
        <taxon>eudicotyledons</taxon>
        <taxon>Gunneridae</taxon>
        <taxon>Pentapetalae</taxon>
        <taxon>rosids</taxon>
        <taxon>malvids</taxon>
        <taxon>Brassicales</taxon>
        <taxon>Brassicaceae</taxon>
        <taxon>Camelineae</taxon>
        <taxon>Arabidopsis</taxon>
    </lineage>
</organism>
<comment type="subunit">
    <text evidence="1">Interacts with WPP/MAF proteins.</text>
</comment>
<comment type="similarity">
    <text evidence="4">Belongs to the FPP family.</text>
</comment>
<comment type="sequence caution" evidence="4">
    <conflict type="erroneous initiation">
        <sequence resource="EMBL-CDS" id="BAF01255"/>
    </conflict>
</comment>
<comment type="sequence caution" evidence="4">
    <conflict type="erroneous gene model prediction">
        <sequence resource="EMBL-CDS" id="CAA18506"/>
    </conflict>
</comment>
<comment type="sequence caution" evidence="4">
    <conflict type="erroneous gene model prediction">
        <sequence resource="EMBL-CDS" id="CAB81521"/>
    </conflict>
</comment>
<gene>
    <name type="primary">FPP5</name>
    <name type="ordered locus">At4g36120</name>
    <name type="ORF">F23E13.10</name>
    <name type="ORF">T19K4.250</name>
</gene>
<reference key="1">
    <citation type="journal article" date="1999" name="Nature">
        <title>Sequence and analysis of chromosome 4 of the plant Arabidopsis thaliana.</title>
        <authorList>
            <person name="Mayer K.F.X."/>
            <person name="Schueller C."/>
            <person name="Wambutt R."/>
            <person name="Murphy G."/>
            <person name="Volckaert G."/>
            <person name="Pohl T."/>
            <person name="Duesterhoeft A."/>
            <person name="Stiekema W."/>
            <person name="Entian K.-D."/>
            <person name="Terryn N."/>
            <person name="Harris B."/>
            <person name="Ansorge W."/>
            <person name="Brandt P."/>
            <person name="Grivell L.A."/>
            <person name="Rieger M."/>
            <person name="Weichselgartner M."/>
            <person name="de Simone V."/>
            <person name="Obermaier B."/>
            <person name="Mache R."/>
            <person name="Mueller M."/>
            <person name="Kreis M."/>
            <person name="Delseny M."/>
            <person name="Puigdomenech P."/>
            <person name="Watson M."/>
            <person name="Schmidtheini T."/>
            <person name="Reichert B."/>
            <person name="Portetelle D."/>
            <person name="Perez-Alonso M."/>
            <person name="Boutry M."/>
            <person name="Bancroft I."/>
            <person name="Vos P."/>
            <person name="Hoheisel J."/>
            <person name="Zimmermann W."/>
            <person name="Wedler H."/>
            <person name="Ridley P."/>
            <person name="Langham S.-A."/>
            <person name="McCullagh B."/>
            <person name="Bilham L."/>
            <person name="Robben J."/>
            <person name="van der Schueren J."/>
            <person name="Grymonprez B."/>
            <person name="Chuang Y.-J."/>
            <person name="Vandenbussche F."/>
            <person name="Braeken M."/>
            <person name="Weltjens I."/>
            <person name="Voet M."/>
            <person name="Bastiaens I."/>
            <person name="Aert R."/>
            <person name="Defoor E."/>
            <person name="Weitzenegger T."/>
            <person name="Bothe G."/>
            <person name="Ramsperger U."/>
            <person name="Hilbert H."/>
            <person name="Braun M."/>
            <person name="Holzer E."/>
            <person name="Brandt A."/>
            <person name="Peters S."/>
            <person name="van Staveren M."/>
            <person name="Dirkse W."/>
            <person name="Mooijman P."/>
            <person name="Klein Lankhorst R."/>
            <person name="Rose M."/>
            <person name="Hauf J."/>
            <person name="Koetter P."/>
            <person name="Berneiser S."/>
            <person name="Hempel S."/>
            <person name="Feldpausch M."/>
            <person name="Lamberth S."/>
            <person name="Van den Daele H."/>
            <person name="De Keyser A."/>
            <person name="Buysshaert C."/>
            <person name="Gielen J."/>
            <person name="Villarroel R."/>
            <person name="De Clercq R."/>
            <person name="van Montagu M."/>
            <person name="Rogers J."/>
            <person name="Cronin A."/>
            <person name="Quail M.A."/>
            <person name="Bray-Allen S."/>
            <person name="Clark L."/>
            <person name="Doggett J."/>
            <person name="Hall S."/>
            <person name="Kay M."/>
            <person name="Lennard N."/>
            <person name="McLay K."/>
            <person name="Mayes R."/>
            <person name="Pettett A."/>
            <person name="Rajandream M.A."/>
            <person name="Lyne M."/>
            <person name="Benes V."/>
            <person name="Rechmann S."/>
            <person name="Borkova D."/>
            <person name="Bloecker H."/>
            <person name="Scharfe M."/>
            <person name="Grimm M."/>
            <person name="Loehnert T.-H."/>
            <person name="Dose S."/>
            <person name="de Haan M."/>
            <person name="Maarse A.C."/>
            <person name="Schaefer M."/>
            <person name="Mueller-Auer S."/>
            <person name="Gabel C."/>
            <person name="Fuchs M."/>
            <person name="Fartmann B."/>
            <person name="Granderath K."/>
            <person name="Dauner D."/>
            <person name="Herzl A."/>
            <person name="Neumann S."/>
            <person name="Argiriou A."/>
            <person name="Vitale D."/>
            <person name="Liguori R."/>
            <person name="Piravandi E."/>
            <person name="Massenet O."/>
            <person name="Quigley F."/>
            <person name="Clabauld G."/>
            <person name="Muendlein A."/>
            <person name="Felber R."/>
            <person name="Schnabl S."/>
            <person name="Hiller R."/>
            <person name="Schmidt W."/>
            <person name="Lecharny A."/>
            <person name="Aubourg S."/>
            <person name="Chefdor F."/>
            <person name="Cooke R."/>
            <person name="Berger C."/>
            <person name="Monfort A."/>
            <person name="Casacuberta E."/>
            <person name="Gibbons T."/>
            <person name="Weber N."/>
            <person name="Vandenbol M."/>
            <person name="Bargues M."/>
            <person name="Terol J."/>
            <person name="Torres A."/>
            <person name="Perez-Perez A."/>
            <person name="Purnelle B."/>
            <person name="Bent E."/>
            <person name="Johnson S."/>
            <person name="Tacon D."/>
            <person name="Jesse T."/>
            <person name="Heijnen L."/>
            <person name="Schwarz S."/>
            <person name="Scholler P."/>
            <person name="Heber S."/>
            <person name="Francs P."/>
            <person name="Bielke C."/>
            <person name="Frishman D."/>
            <person name="Haase D."/>
            <person name="Lemcke K."/>
            <person name="Mewes H.-W."/>
            <person name="Stocker S."/>
            <person name="Zaccaria P."/>
            <person name="Bevan M."/>
            <person name="Wilson R.K."/>
            <person name="de la Bastide M."/>
            <person name="Habermann K."/>
            <person name="Parnell L."/>
            <person name="Dedhia N."/>
            <person name="Gnoj L."/>
            <person name="Schutz K."/>
            <person name="Huang E."/>
            <person name="Spiegel L."/>
            <person name="Sekhon M."/>
            <person name="Murray J."/>
            <person name="Sheet P."/>
            <person name="Cordes M."/>
            <person name="Abu-Threideh J."/>
            <person name="Stoneking T."/>
            <person name="Kalicki J."/>
            <person name="Graves T."/>
            <person name="Harmon G."/>
            <person name="Edwards J."/>
            <person name="Latreille P."/>
            <person name="Courtney L."/>
            <person name="Cloud J."/>
            <person name="Abbott A."/>
            <person name="Scott K."/>
            <person name="Johnson D."/>
            <person name="Minx P."/>
            <person name="Bentley D."/>
            <person name="Fulton B."/>
            <person name="Miller N."/>
            <person name="Greco T."/>
            <person name="Kemp K."/>
            <person name="Kramer J."/>
            <person name="Fulton L."/>
            <person name="Mardis E."/>
            <person name="Dante M."/>
            <person name="Pepin K."/>
            <person name="Hillier L.W."/>
            <person name="Nelson J."/>
            <person name="Spieth J."/>
            <person name="Ryan E."/>
            <person name="Andrews S."/>
            <person name="Geisel C."/>
            <person name="Layman D."/>
            <person name="Du H."/>
            <person name="Ali J."/>
            <person name="Berghoff A."/>
            <person name="Jones K."/>
            <person name="Drone K."/>
            <person name="Cotton M."/>
            <person name="Joshu C."/>
            <person name="Antonoiu B."/>
            <person name="Zidanic M."/>
            <person name="Strong C."/>
            <person name="Sun H."/>
            <person name="Lamar B."/>
            <person name="Yordan C."/>
            <person name="Ma P."/>
            <person name="Zhong J."/>
            <person name="Preston R."/>
            <person name="Vil D."/>
            <person name="Shekher M."/>
            <person name="Matero A."/>
            <person name="Shah R."/>
            <person name="Swaby I.K."/>
            <person name="O'Shaughnessy A."/>
            <person name="Rodriguez M."/>
            <person name="Hoffman J."/>
            <person name="Till S."/>
            <person name="Granat S."/>
            <person name="Shohdy N."/>
            <person name="Hasegawa A."/>
            <person name="Hameed A."/>
            <person name="Lodhi M."/>
            <person name="Johnson A."/>
            <person name="Chen E."/>
            <person name="Marra M.A."/>
            <person name="Martienssen R."/>
            <person name="McCombie W.R."/>
        </authorList>
    </citation>
    <scope>NUCLEOTIDE SEQUENCE [LARGE SCALE GENOMIC DNA]</scope>
    <source>
        <strain>cv. Columbia</strain>
    </source>
</reference>
<reference key="2">
    <citation type="journal article" date="2017" name="Plant J.">
        <title>Araport11: a complete reannotation of the Arabidopsis thaliana reference genome.</title>
        <authorList>
            <person name="Cheng C.Y."/>
            <person name="Krishnakumar V."/>
            <person name="Chan A.P."/>
            <person name="Thibaud-Nissen F."/>
            <person name="Schobel S."/>
            <person name="Town C.D."/>
        </authorList>
    </citation>
    <scope>GENOME REANNOTATION</scope>
    <source>
        <strain>cv. Columbia</strain>
    </source>
</reference>
<reference key="3">
    <citation type="submission" date="2006-07" db="EMBL/GenBank/DDBJ databases">
        <title>Large-scale analysis of RIKEN Arabidopsis full-length (RAFL) cDNAs.</title>
        <authorList>
            <person name="Totoki Y."/>
            <person name="Seki M."/>
            <person name="Ishida J."/>
            <person name="Nakajima M."/>
            <person name="Enju A."/>
            <person name="Kamiya A."/>
            <person name="Narusaka M."/>
            <person name="Shin-i T."/>
            <person name="Nakagawa M."/>
            <person name="Sakamoto N."/>
            <person name="Oishi K."/>
            <person name="Kohara Y."/>
            <person name="Kobayashi M."/>
            <person name="Toyoda A."/>
            <person name="Sakaki Y."/>
            <person name="Sakurai T."/>
            <person name="Iida K."/>
            <person name="Akiyama K."/>
            <person name="Satou M."/>
            <person name="Toyoda T."/>
            <person name="Konagaya A."/>
            <person name="Carninci P."/>
            <person name="Kawai J."/>
            <person name="Hayashizaki Y."/>
            <person name="Shinozaki K."/>
        </authorList>
    </citation>
    <scope>NUCLEOTIDE SEQUENCE [LARGE SCALE MRNA] OF 327-996</scope>
    <source>
        <strain>cv. Columbia</strain>
    </source>
</reference>
<reference key="4">
    <citation type="journal article" date="2002" name="BMC Genomics">
        <title>Four signature motifs define the first class of structurally related large coiled-coil proteins in plants.</title>
        <authorList>
            <person name="Gindullis F."/>
            <person name="Rose A."/>
            <person name="Patel S."/>
            <person name="Meier I."/>
        </authorList>
    </citation>
    <scope>GENE FAMILY</scope>
    <scope>NOMENCLATURE</scope>
</reference>
<evidence type="ECO:0000250" key="1"/>
<evidence type="ECO:0000255" key="2"/>
<evidence type="ECO:0000256" key="3">
    <source>
        <dbReference type="SAM" id="MobiDB-lite"/>
    </source>
</evidence>
<evidence type="ECO:0000305" key="4"/>
<feature type="chain" id="PRO_0000347203" description="Filament-like plant protein 5">
    <location>
        <begin position="1"/>
        <end position="996"/>
    </location>
</feature>
<feature type="region of interest" description="Disordered" evidence="3">
    <location>
        <begin position="1"/>
        <end position="20"/>
    </location>
</feature>
<feature type="region of interest" description="Disordered" evidence="3">
    <location>
        <begin position="409"/>
        <end position="482"/>
    </location>
</feature>
<feature type="region of interest" description="Disordered" evidence="3">
    <location>
        <begin position="496"/>
        <end position="534"/>
    </location>
</feature>
<feature type="region of interest" description="Disordered" evidence="3">
    <location>
        <begin position="962"/>
        <end position="996"/>
    </location>
</feature>
<feature type="coiled-coil region" evidence="2">
    <location>
        <begin position="59"/>
        <end position="94"/>
    </location>
</feature>
<feature type="coiled-coil region" evidence="2">
    <location>
        <begin position="133"/>
        <end position="248"/>
    </location>
</feature>
<feature type="coiled-coil region" evidence="2">
    <location>
        <begin position="280"/>
        <end position="301"/>
    </location>
</feature>
<feature type="coiled-coil region" evidence="2">
    <location>
        <begin position="359"/>
        <end position="387"/>
    </location>
</feature>
<feature type="coiled-coil region" evidence="2">
    <location>
        <begin position="601"/>
        <end position="622"/>
    </location>
</feature>
<feature type="coiled-coil region" evidence="2">
    <location>
        <begin position="737"/>
        <end position="841"/>
    </location>
</feature>
<feature type="coiled-coil region" evidence="2">
    <location>
        <begin position="876"/>
        <end position="906"/>
    </location>
</feature>
<feature type="compositionally biased region" description="Low complexity" evidence="3">
    <location>
        <begin position="417"/>
        <end position="428"/>
    </location>
</feature>
<feature type="compositionally biased region" description="Polar residues" evidence="3">
    <location>
        <begin position="471"/>
        <end position="482"/>
    </location>
</feature>
<feature type="compositionally biased region" description="Low complexity" evidence="3">
    <location>
        <begin position="503"/>
        <end position="527"/>
    </location>
</feature>
<feature type="sequence conflict" description="In Ref. 3; BAF01255." evidence="4" ref="3">
    <original>S</original>
    <variation>T</variation>
    <location>
        <position position="971"/>
    </location>
</feature>
<protein>
    <recommendedName>
        <fullName>Filament-like plant protein 5</fullName>
        <shortName>AtFPP5</shortName>
    </recommendedName>
</protein>
<accession>O65649</accession>
<accession>Q0WNP4</accession>
<accession>Q7FKM9</accession>